<protein>
    <recommendedName>
        <fullName evidence="1">Small ribosomal subunit protein bS21A</fullName>
    </recommendedName>
    <alternativeName>
        <fullName evidence="2">30S ribosomal protein S21 1</fullName>
    </alternativeName>
</protein>
<sequence length="70" mass="8363">MTTILLKENEPFEVAIRRFRRAIEKNGLIAELRERQAYEKPTAVRKRKKAAAVKRLHKRLRSQMLPKKLH</sequence>
<gene>
    <name evidence="1" type="primary">rpsU1</name>
    <name type="ordered locus">BP1026B_I3554.1</name>
</gene>
<dbReference type="EMBL" id="U73848">
    <property type="protein sequence ID" value="AAB51475.1"/>
    <property type="molecule type" value="Genomic_DNA"/>
</dbReference>
<dbReference type="EMBL" id="CP002833">
    <property type="status" value="NOT_ANNOTATED_CDS"/>
    <property type="molecule type" value="Genomic_DNA"/>
</dbReference>
<dbReference type="SMR" id="P0DML0"/>
<dbReference type="PATRIC" id="fig|884204.6.peg.747"/>
<dbReference type="Proteomes" id="UP000010087">
    <property type="component" value="Chromosome 1"/>
</dbReference>
<dbReference type="GO" id="GO:1990904">
    <property type="term" value="C:ribonucleoprotein complex"/>
    <property type="evidence" value="ECO:0007669"/>
    <property type="project" value="UniProtKB-KW"/>
</dbReference>
<dbReference type="GO" id="GO:0005840">
    <property type="term" value="C:ribosome"/>
    <property type="evidence" value="ECO:0007669"/>
    <property type="project" value="UniProtKB-KW"/>
</dbReference>
<dbReference type="GO" id="GO:0003735">
    <property type="term" value="F:structural constituent of ribosome"/>
    <property type="evidence" value="ECO:0007669"/>
    <property type="project" value="InterPro"/>
</dbReference>
<dbReference type="GO" id="GO:0006412">
    <property type="term" value="P:translation"/>
    <property type="evidence" value="ECO:0007669"/>
    <property type="project" value="UniProtKB-UniRule"/>
</dbReference>
<dbReference type="Gene3D" id="1.20.5.1150">
    <property type="entry name" value="Ribosomal protein S8"/>
    <property type="match status" value="1"/>
</dbReference>
<dbReference type="HAMAP" id="MF_00358">
    <property type="entry name" value="Ribosomal_bS21"/>
    <property type="match status" value="1"/>
</dbReference>
<dbReference type="InterPro" id="IPR001911">
    <property type="entry name" value="Ribosomal_bS21"/>
</dbReference>
<dbReference type="InterPro" id="IPR038380">
    <property type="entry name" value="Ribosomal_bS21_sf"/>
</dbReference>
<dbReference type="NCBIfam" id="TIGR00030">
    <property type="entry name" value="S21p"/>
    <property type="match status" value="1"/>
</dbReference>
<dbReference type="PANTHER" id="PTHR21109">
    <property type="entry name" value="MITOCHONDRIAL 28S RIBOSOMAL PROTEIN S21"/>
    <property type="match status" value="1"/>
</dbReference>
<dbReference type="PANTHER" id="PTHR21109:SF22">
    <property type="entry name" value="SMALL RIBOSOMAL SUBUNIT PROTEIN BS21"/>
    <property type="match status" value="1"/>
</dbReference>
<dbReference type="Pfam" id="PF01165">
    <property type="entry name" value="Ribosomal_S21"/>
    <property type="match status" value="1"/>
</dbReference>
<dbReference type="PRINTS" id="PR00976">
    <property type="entry name" value="RIBOSOMALS21"/>
</dbReference>
<name>RS211_BURP2</name>
<comment type="similarity">
    <text evidence="1">Belongs to the bacterial ribosomal protein bS21 family.</text>
</comment>
<accession>P0DML0</accession>
<accession>O88123</accession>
<accession>P70943</accession>
<accession>Q63PQ5</accession>
<keyword id="KW-0687">Ribonucleoprotein</keyword>
<keyword id="KW-0689">Ribosomal protein</keyword>
<evidence type="ECO:0000255" key="1">
    <source>
        <dbReference type="HAMAP-Rule" id="MF_00358"/>
    </source>
</evidence>
<evidence type="ECO:0000305" key="2"/>
<organism>
    <name type="scientific">Burkholderia pseudomallei (strain 1026b)</name>
    <dbReference type="NCBI Taxonomy" id="884204"/>
    <lineage>
        <taxon>Bacteria</taxon>
        <taxon>Pseudomonadati</taxon>
        <taxon>Pseudomonadota</taxon>
        <taxon>Betaproteobacteria</taxon>
        <taxon>Burkholderiales</taxon>
        <taxon>Burkholderiaceae</taxon>
        <taxon>Burkholderia</taxon>
        <taxon>pseudomallei group</taxon>
    </lineage>
</organism>
<reference key="1">
    <citation type="journal article" date="1997" name="J. Bacteriol.">
        <title>Mutagenesis of Burkholderia pseudomallei with Tn5-OT182: isolation of motility mutants and molecular characterization of the flagellin structural gene.</title>
        <authorList>
            <person name="DeShazer D."/>
            <person name="Brett P.J."/>
            <person name="Carlyon R."/>
            <person name="Woods D.E."/>
        </authorList>
    </citation>
    <scope>NUCLEOTIDE SEQUENCE [GENOMIC DNA]</scope>
    <source>
        <strain>1026b</strain>
    </source>
</reference>
<reference key="2">
    <citation type="journal article" date="2012" name="PLoS ONE">
        <title>Evolution of Burkholderia pseudomallei in recurrent melioidosis.</title>
        <authorList>
            <person name="Hayden H.S."/>
            <person name="Lim R."/>
            <person name="Brittnacher M.J."/>
            <person name="Sims E.H."/>
            <person name="Ramage E.R."/>
            <person name="Fong C."/>
            <person name="Wu Z."/>
            <person name="Crist E."/>
            <person name="Chang J."/>
            <person name="Zhou Y."/>
            <person name="Radey M."/>
            <person name="Rohmer L."/>
            <person name="Haugen E."/>
            <person name="Gillett W."/>
            <person name="Wuthiekanun V."/>
            <person name="Peacock S.J."/>
            <person name="Kaul R."/>
            <person name="Miller S.I."/>
            <person name="Manoil C."/>
            <person name="Jacobs M.A."/>
        </authorList>
    </citation>
    <scope>NUCLEOTIDE SEQUENCE [LARGE SCALE GENOMIC DNA]</scope>
    <source>
        <strain>1026b</strain>
    </source>
</reference>
<feature type="chain" id="PRO_0000429793" description="Small ribosomal subunit protein bS21A">
    <location>
        <begin position="1"/>
        <end position="70"/>
    </location>
</feature>
<proteinExistence type="inferred from homology"/>